<organism>
    <name type="scientific">Desulfosudis oleivorans (strain DSM 6200 / JCM 39069 / Hxd3)</name>
    <name type="common">Desulfococcus oleovorans</name>
    <dbReference type="NCBI Taxonomy" id="96561"/>
    <lineage>
        <taxon>Bacteria</taxon>
        <taxon>Pseudomonadati</taxon>
        <taxon>Thermodesulfobacteriota</taxon>
        <taxon>Desulfobacteria</taxon>
        <taxon>Desulfobacterales</taxon>
        <taxon>Desulfosudaceae</taxon>
        <taxon>Desulfosudis</taxon>
    </lineage>
</organism>
<name>KATG_DESOH</name>
<sequence length="732" mass="80818">MDKDSKRPVVGSTVRGGMSNRDWWPNQLNLSILHQQSNKSNPMGEDFDYAKEFKKLNLAAVKKDLYALMTDSQEWWPADYGHYGGLFIRMAWHSAGTYRMGDGRGGAGSGSQRLAPLNSWPDNANLDKARRLLWPIKKKYGKRISWADLMVLAGNCALESMGFKTFGFAGGREDVWEPETDIYWGAEEEWLATSDKPKSRYSGDRDLENPLAAVQMGLIYVNPEGPDGNPDPVAAGYDVIETFARMAMDPEETVALVAGGHTFGKCHGAGPASHVGPEPEAAPIEAQGLGWKSSFGTGKGGDTITSGIEGAWKPYPTRWDMGYLKVLFKYEWELVKSPAGAYQWLAMDVDEEDMVIDAHDPSKKHRPMMTTADLSLRFDPVLGPIAKRFSKNPKAFADAFARAWFKLTHRDMGPRSRYLGPEVPKKELIWQDPVPAVNHKLIGARDIAALKREILASGLSVSQLVYTAWSSAVTFRGSDKRGGANGARIRLAPQKEWEVNQPAQLKKVLAKLEKIRRAFNSAQSDGKKVSLADLIVLGGCAAIEQAARNAGYKGTVPFKPGRMDATQKQTDAASFAVLEPLADGFRNYLKAKFTVSAEELLIDKARLLTLTAPEMTVLIGGMRVLNANYGQSPHGVFTKRPETLTNDFFVNLLDMGTVWNPAKADDCVFEGRDRQTGALRWTGTRVDLLFGSNSQLRAIAEVYACKDAGEKFVNDFVAVWNKVMNADRFDLA</sequence>
<accession>A9A0F0</accession>
<proteinExistence type="inferred from homology"/>
<feature type="chain" id="PRO_0000354768" description="Catalase-peroxidase">
    <location>
        <begin position="1"/>
        <end position="732"/>
    </location>
</feature>
<feature type="region of interest" description="Disordered" evidence="2">
    <location>
        <begin position="1"/>
        <end position="20"/>
    </location>
</feature>
<feature type="active site" description="Proton acceptor" evidence="1">
    <location>
        <position position="93"/>
    </location>
</feature>
<feature type="binding site" description="axial binding residue" evidence="1">
    <location>
        <position position="261"/>
    </location>
    <ligand>
        <name>heme b</name>
        <dbReference type="ChEBI" id="CHEBI:60344"/>
    </ligand>
    <ligandPart>
        <name>Fe</name>
        <dbReference type="ChEBI" id="CHEBI:18248"/>
    </ligandPart>
</feature>
<feature type="site" description="Transition state stabilizer" evidence="1">
    <location>
        <position position="89"/>
    </location>
</feature>
<feature type="cross-link" description="Tryptophyl-tyrosyl-methioninium (Trp-Tyr) (with M-246)" evidence="1">
    <location>
        <begin position="92"/>
        <end position="220"/>
    </location>
</feature>
<feature type="cross-link" description="Tryptophyl-tyrosyl-methioninium (Tyr-Met) (with W-92)" evidence="1">
    <location>
        <begin position="220"/>
        <end position="246"/>
    </location>
</feature>
<evidence type="ECO:0000255" key="1">
    <source>
        <dbReference type="HAMAP-Rule" id="MF_01961"/>
    </source>
</evidence>
<evidence type="ECO:0000256" key="2">
    <source>
        <dbReference type="SAM" id="MobiDB-lite"/>
    </source>
</evidence>
<protein>
    <recommendedName>
        <fullName evidence="1">Catalase-peroxidase</fullName>
        <shortName evidence="1">CP</shortName>
        <ecNumber evidence="1">1.11.1.21</ecNumber>
    </recommendedName>
    <alternativeName>
        <fullName evidence="1">Peroxidase/catalase</fullName>
    </alternativeName>
</protein>
<keyword id="KW-0349">Heme</keyword>
<keyword id="KW-0376">Hydrogen peroxide</keyword>
<keyword id="KW-0408">Iron</keyword>
<keyword id="KW-0479">Metal-binding</keyword>
<keyword id="KW-0560">Oxidoreductase</keyword>
<keyword id="KW-0575">Peroxidase</keyword>
<keyword id="KW-1185">Reference proteome</keyword>
<reference key="1">
    <citation type="submission" date="2007-10" db="EMBL/GenBank/DDBJ databases">
        <title>Complete sequence of Desulfococcus oleovorans Hxd3.</title>
        <authorList>
            <consortium name="US DOE Joint Genome Institute"/>
            <person name="Copeland A."/>
            <person name="Lucas S."/>
            <person name="Lapidus A."/>
            <person name="Barry K."/>
            <person name="Glavina del Rio T."/>
            <person name="Dalin E."/>
            <person name="Tice H."/>
            <person name="Pitluck S."/>
            <person name="Kiss H."/>
            <person name="Brettin T."/>
            <person name="Bruce D."/>
            <person name="Detter J.C."/>
            <person name="Han C."/>
            <person name="Schmutz J."/>
            <person name="Larimer F."/>
            <person name="Land M."/>
            <person name="Hauser L."/>
            <person name="Kyrpides N."/>
            <person name="Kim E."/>
            <person name="Wawrik B."/>
            <person name="Richardson P."/>
        </authorList>
    </citation>
    <scope>NUCLEOTIDE SEQUENCE [LARGE SCALE GENOMIC DNA]</scope>
    <source>
        <strain>DSM 6200 / JCM 39069 / Hxd3</strain>
    </source>
</reference>
<comment type="function">
    <text evidence="1">Bifunctional enzyme with both catalase and broad-spectrum peroxidase activity.</text>
</comment>
<comment type="catalytic activity">
    <reaction evidence="1">
        <text>H2O2 + AH2 = A + 2 H2O</text>
        <dbReference type="Rhea" id="RHEA:30275"/>
        <dbReference type="ChEBI" id="CHEBI:13193"/>
        <dbReference type="ChEBI" id="CHEBI:15377"/>
        <dbReference type="ChEBI" id="CHEBI:16240"/>
        <dbReference type="ChEBI" id="CHEBI:17499"/>
        <dbReference type="EC" id="1.11.1.21"/>
    </reaction>
</comment>
<comment type="catalytic activity">
    <reaction evidence="1">
        <text>2 H2O2 = O2 + 2 H2O</text>
        <dbReference type="Rhea" id="RHEA:20309"/>
        <dbReference type="ChEBI" id="CHEBI:15377"/>
        <dbReference type="ChEBI" id="CHEBI:15379"/>
        <dbReference type="ChEBI" id="CHEBI:16240"/>
        <dbReference type="EC" id="1.11.1.21"/>
    </reaction>
</comment>
<comment type="cofactor">
    <cofactor evidence="1">
        <name>heme b</name>
        <dbReference type="ChEBI" id="CHEBI:60344"/>
    </cofactor>
    <text evidence="1">Binds 1 heme b (iron(II)-protoporphyrin IX) group per dimer.</text>
</comment>
<comment type="subunit">
    <text evidence="1">Homodimer or homotetramer.</text>
</comment>
<comment type="PTM">
    <text evidence="1">Formation of the three residue Trp-Tyr-Met cross-link is important for the catalase, but not the peroxidase activity of the enzyme.</text>
</comment>
<comment type="similarity">
    <text evidence="1">Belongs to the peroxidase family. Peroxidase/catalase subfamily.</text>
</comment>
<dbReference type="EC" id="1.11.1.21" evidence="1"/>
<dbReference type="EMBL" id="CP000859">
    <property type="protein sequence ID" value="ABW67450.1"/>
    <property type="molecule type" value="Genomic_DNA"/>
</dbReference>
<dbReference type="RefSeq" id="WP_012175066.1">
    <property type="nucleotide sequence ID" value="NC_009943.1"/>
</dbReference>
<dbReference type="SMR" id="A9A0F0"/>
<dbReference type="STRING" id="96561.Dole_1646"/>
<dbReference type="KEGG" id="dol:Dole_1646"/>
<dbReference type="eggNOG" id="COG0376">
    <property type="taxonomic scope" value="Bacteria"/>
</dbReference>
<dbReference type="HOGENOM" id="CLU_025424_2_0_7"/>
<dbReference type="OrthoDB" id="9759743at2"/>
<dbReference type="Proteomes" id="UP000008561">
    <property type="component" value="Chromosome"/>
</dbReference>
<dbReference type="GO" id="GO:0005829">
    <property type="term" value="C:cytosol"/>
    <property type="evidence" value="ECO:0007669"/>
    <property type="project" value="TreeGrafter"/>
</dbReference>
<dbReference type="GO" id="GO:0004096">
    <property type="term" value="F:catalase activity"/>
    <property type="evidence" value="ECO:0007669"/>
    <property type="project" value="UniProtKB-UniRule"/>
</dbReference>
<dbReference type="GO" id="GO:0020037">
    <property type="term" value="F:heme binding"/>
    <property type="evidence" value="ECO:0007669"/>
    <property type="project" value="InterPro"/>
</dbReference>
<dbReference type="GO" id="GO:0046872">
    <property type="term" value="F:metal ion binding"/>
    <property type="evidence" value="ECO:0007669"/>
    <property type="project" value="UniProtKB-KW"/>
</dbReference>
<dbReference type="GO" id="GO:0070301">
    <property type="term" value="P:cellular response to hydrogen peroxide"/>
    <property type="evidence" value="ECO:0007669"/>
    <property type="project" value="TreeGrafter"/>
</dbReference>
<dbReference type="GO" id="GO:0042744">
    <property type="term" value="P:hydrogen peroxide catabolic process"/>
    <property type="evidence" value="ECO:0007669"/>
    <property type="project" value="UniProtKB-KW"/>
</dbReference>
<dbReference type="CDD" id="cd00649">
    <property type="entry name" value="catalase_peroxidase_1"/>
    <property type="match status" value="1"/>
</dbReference>
<dbReference type="CDD" id="cd08200">
    <property type="entry name" value="catalase_peroxidase_2"/>
    <property type="match status" value="1"/>
</dbReference>
<dbReference type="FunFam" id="1.10.420.10:FF:000002">
    <property type="entry name" value="Catalase-peroxidase"/>
    <property type="match status" value="1"/>
</dbReference>
<dbReference type="FunFam" id="1.10.420.10:FF:000004">
    <property type="entry name" value="Catalase-peroxidase"/>
    <property type="match status" value="1"/>
</dbReference>
<dbReference type="FunFam" id="1.10.520.10:FF:000002">
    <property type="entry name" value="Catalase-peroxidase"/>
    <property type="match status" value="1"/>
</dbReference>
<dbReference type="Gene3D" id="1.10.520.10">
    <property type="match status" value="2"/>
</dbReference>
<dbReference type="Gene3D" id="1.10.420.10">
    <property type="entry name" value="Peroxidase, domain 2"/>
    <property type="match status" value="2"/>
</dbReference>
<dbReference type="HAMAP" id="MF_01961">
    <property type="entry name" value="Catal_peroxid"/>
    <property type="match status" value="1"/>
</dbReference>
<dbReference type="InterPro" id="IPR000763">
    <property type="entry name" value="Catalase_peroxidase"/>
</dbReference>
<dbReference type="InterPro" id="IPR002016">
    <property type="entry name" value="Haem_peroxidase"/>
</dbReference>
<dbReference type="InterPro" id="IPR010255">
    <property type="entry name" value="Haem_peroxidase_sf"/>
</dbReference>
<dbReference type="InterPro" id="IPR019794">
    <property type="entry name" value="Peroxidases_AS"/>
</dbReference>
<dbReference type="InterPro" id="IPR019793">
    <property type="entry name" value="Peroxidases_heam-ligand_BS"/>
</dbReference>
<dbReference type="NCBIfam" id="TIGR00198">
    <property type="entry name" value="cat_per_HPI"/>
    <property type="match status" value="1"/>
</dbReference>
<dbReference type="NCBIfam" id="NF011635">
    <property type="entry name" value="PRK15061.1"/>
    <property type="match status" value="1"/>
</dbReference>
<dbReference type="PANTHER" id="PTHR30555:SF0">
    <property type="entry name" value="CATALASE-PEROXIDASE"/>
    <property type="match status" value="1"/>
</dbReference>
<dbReference type="PANTHER" id="PTHR30555">
    <property type="entry name" value="HYDROPEROXIDASE I, BIFUNCTIONAL CATALASE-PEROXIDASE"/>
    <property type="match status" value="1"/>
</dbReference>
<dbReference type="Pfam" id="PF00141">
    <property type="entry name" value="peroxidase"/>
    <property type="match status" value="2"/>
</dbReference>
<dbReference type="PRINTS" id="PR00460">
    <property type="entry name" value="BPEROXIDASE"/>
</dbReference>
<dbReference type="PRINTS" id="PR00458">
    <property type="entry name" value="PEROXIDASE"/>
</dbReference>
<dbReference type="SUPFAM" id="SSF48113">
    <property type="entry name" value="Heme-dependent peroxidases"/>
    <property type="match status" value="2"/>
</dbReference>
<dbReference type="PROSITE" id="PS00435">
    <property type="entry name" value="PEROXIDASE_1"/>
    <property type="match status" value="1"/>
</dbReference>
<dbReference type="PROSITE" id="PS00436">
    <property type="entry name" value="PEROXIDASE_2"/>
    <property type="match status" value="1"/>
</dbReference>
<dbReference type="PROSITE" id="PS50873">
    <property type="entry name" value="PEROXIDASE_4"/>
    <property type="match status" value="1"/>
</dbReference>
<gene>
    <name evidence="1" type="primary">katG</name>
    <name type="ordered locus">Dole_1646</name>
</gene>